<dbReference type="EMBL" id="AE017355">
    <property type="protein sequence ID" value="AAT61473.1"/>
    <property type="molecule type" value="Genomic_DNA"/>
</dbReference>
<dbReference type="RefSeq" id="WP_000160207.1">
    <property type="nucleotide sequence ID" value="NC_005957.1"/>
</dbReference>
<dbReference type="RefSeq" id="YP_034462.1">
    <property type="nucleotide sequence ID" value="NC_005957.1"/>
</dbReference>
<dbReference type="SMR" id="Q6HPQ8"/>
<dbReference type="GeneID" id="93010943"/>
<dbReference type="KEGG" id="btk:BT9727_0106"/>
<dbReference type="PATRIC" id="fig|281309.8.peg.107"/>
<dbReference type="HOGENOM" id="CLU_044142_4_1_9"/>
<dbReference type="Proteomes" id="UP000001301">
    <property type="component" value="Chromosome"/>
</dbReference>
<dbReference type="GO" id="GO:0022625">
    <property type="term" value="C:cytosolic large ribosomal subunit"/>
    <property type="evidence" value="ECO:0007669"/>
    <property type="project" value="TreeGrafter"/>
</dbReference>
<dbReference type="GO" id="GO:0019843">
    <property type="term" value="F:rRNA binding"/>
    <property type="evidence" value="ECO:0007669"/>
    <property type="project" value="UniProtKB-UniRule"/>
</dbReference>
<dbReference type="GO" id="GO:0003735">
    <property type="term" value="F:structural constituent of ribosome"/>
    <property type="evidence" value="ECO:0007669"/>
    <property type="project" value="InterPro"/>
</dbReference>
<dbReference type="GO" id="GO:0006412">
    <property type="term" value="P:translation"/>
    <property type="evidence" value="ECO:0007669"/>
    <property type="project" value="UniProtKB-UniRule"/>
</dbReference>
<dbReference type="FunFam" id="2.40.30.10:FF:000004">
    <property type="entry name" value="50S ribosomal protein L3"/>
    <property type="match status" value="1"/>
</dbReference>
<dbReference type="FunFam" id="3.30.160.810:FF:000002">
    <property type="entry name" value="50S ribosomal protein L3"/>
    <property type="match status" value="1"/>
</dbReference>
<dbReference type="Gene3D" id="3.30.160.810">
    <property type="match status" value="1"/>
</dbReference>
<dbReference type="Gene3D" id="2.40.30.10">
    <property type="entry name" value="Translation factors"/>
    <property type="match status" value="1"/>
</dbReference>
<dbReference type="HAMAP" id="MF_01325_B">
    <property type="entry name" value="Ribosomal_uL3_B"/>
    <property type="match status" value="1"/>
</dbReference>
<dbReference type="InterPro" id="IPR000597">
    <property type="entry name" value="Ribosomal_uL3"/>
</dbReference>
<dbReference type="InterPro" id="IPR019927">
    <property type="entry name" value="Ribosomal_uL3_bac/org-type"/>
</dbReference>
<dbReference type="InterPro" id="IPR019926">
    <property type="entry name" value="Ribosomal_uL3_CS"/>
</dbReference>
<dbReference type="InterPro" id="IPR009000">
    <property type="entry name" value="Transl_B-barrel_sf"/>
</dbReference>
<dbReference type="NCBIfam" id="TIGR03625">
    <property type="entry name" value="L3_bact"/>
    <property type="match status" value="1"/>
</dbReference>
<dbReference type="PANTHER" id="PTHR11229">
    <property type="entry name" value="50S RIBOSOMAL PROTEIN L3"/>
    <property type="match status" value="1"/>
</dbReference>
<dbReference type="PANTHER" id="PTHR11229:SF16">
    <property type="entry name" value="LARGE RIBOSOMAL SUBUNIT PROTEIN UL3C"/>
    <property type="match status" value="1"/>
</dbReference>
<dbReference type="Pfam" id="PF00297">
    <property type="entry name" value="Ribosomal_L3"/>
    <property type="match status" value="1"/>
</dbReference>
<dbReference type="SUPFAM" id="SSF50447">
    <property type="entry name" value="Translation proteins"/>
    <property type="match status" value="1"/>
</dbReference>
<dbReference type="PROSITE" id="PS00474">
    <property type="entry name" value="RIBOSOMAL_L3"/>
    <property type="match status" value="1"/>
</dbReference>
<accession>Q6HPQ8</accession>
<evidence type="ECO:0000255" key="1">
    <source>
        <dbReference type="HAMAP-Rule" id="MF_01325"/>
    </source>
</evidence>
<evidence type="ECO:0000256" key="2">
    <source>
        <dbReference type="SAM" id="MobiDB-lite"/>
    </source>
</evidence>
<evidence type="ECO:0000305" key="3"/>
<sequence length="210" mass="22692">MTKGILGRKIGMTQVFAENGELIPVTVIAANPNVVLQKKTTETDGYNAIQLGFEDKREKLTNKPEQGHTAKASTTPKRFIREIRDADVDGLEVGQEVKVDVFATGEIVDVTGISKGKGFQGVIKRHGQSRGPMSHGSRYHRRPGSMGPVAPNRVFKGKKLAGRMGGDQVTIQNLEIVQVDTERNLLLVKGNVPGAKKSLVVVQGAVKVSK</sequence>
<feature type="chain" id="PRO_0000241314" description="Large ribosomal subunit protein uL3">
    <location>
        <begin position="1"/>
        <end position="210"/>
    </location>
</feature>
<feature type="region of interest" description="Disordered" evidence="2">
    <location>
        <begin position="125"/>
        <end position="151"/>
    </location>
</feature>
<reference key="1">
    <citation type="journal article" date="2006" name="J. Bacteriol.">
        <title>Pathogenomic sequence analysis of Bacillus cereus and Bacillus thuringiensis isolates closely related to Bacillus anthracis.</title>
        <authorList>
            <person name="Han C.S."/>
            <person name="Xie G."/>
            <person name="Challacombe J.F."/>
            <person name="Altherr M.R."/>
            <person name="Bhotika S.S."/>
            <person name="Bruce D."/>
            <person name="Campbell C.S."/>
            <person name="Campbell M.L."/>
            <person name="Chen J."/>
            <person name="Chertkov O."/>
            <person name="Cleland C."/>
            <person name="Dimitrijevic M."/>
            <person name="Doggett N.A."/>
            <person name="Fawcett J.J."/>
            <person name="Glavina T."/>
            <person name="Goodwin L.A."/>
            <person name="Hill K.K."/>
            <person name="Hitchcock P."/>
            <person name="Jackson P.J."/>
            <person name="Keim P."/>
            <person name="Kewalramani A.R."/>
            <person name="Longmire J."/>
            <person name="Lucas S."/>
            <person name="Malfatti S."/>
            <person name="McMurry K."/>
            <person name="Meincke L.J."/>
            <person name="Misra M."/>
            <person name="Moseman B.L."/>
            <person name="Mundt M."/>
            <person name="Munk A.C."/>
            <person name="Okinaka R.T."/>
            <person name="Parson-Quintana B."/>
            <person name="Reilly L.P."/>
            <person name="Richardson P."/>
            <person name="Robinson D.L."/>
            <person name="Rubin E."/>
            <person name="Saunders E."/>
            <person name="Tapia R."/>
            <person name="Tesmer J.G."/>
            <person name="Thayer N."/>
            <person name="Thompson L.S."/>
            <person name="Tice H."/>
            <person name="Ticknor L.O."/>
            <person name="Wills P.L."/>
            <person name="Brettin T.S."/>
            <person name="Gilna P."/>
        </authorList>
    </citation>
    <scope>NUCLEOTIDE SEQUENCE [LARGE SCALE GENOMIC DNA]</scope>
    <source>
        <strain>97-27</strain>
    </source>
</reference>
<proteinExistence type="inferred from homology"/>
<gene>
    <name evidence="1" type="primary">rplC</name>
    <name type="ordered locus">BT9727_0106</name>
</gene>
<protein>
    <recommendedName>
        <fullName evidence="1">Large ribosomal subunit protein uL3</fullName>
    </recommendedName>
    <alternativeName>
        <fullName evidence="3">50S ribosomal protein L3</fullName>
    </alternativeName>
</protein>
<organism>
    <name type="scientific">Bacillus thuringiensis subsp. konkukian (strain 97-27)</name>
    <dbReference type="NCBI Taxonomy" id="281309"/>
    <lineage>
        <taxon>Bacteria</taxon>
        <taxon>Bacillati</taxon>
        <taxon>Bacillota</taxon>
        <taxon>Bacilli</taxon>
        <taxon>Bacillales</taxon>
        <taxon>Bacillaceae</taxon>
        <taxon>Bacillus</taxon>
        <taxon>Bacillus cereus group</taxon>
    </lineage>
</organism>
<keyword id="KW-0687">Ribonucleoprotein</keyword>
<keyword id="KW-0689">Ribosomal protein</keyword>
<keyword id="KW-0694">RNA-binding</keyword>
<keyword id="KW-0699">rRNA-binding</keyword>
<name>RL3_BACHK</name>
<comment type="function">
    <text evidence="1">One of the primary rRNA binding proteins, it binds directly near the 3'-end of the 23S rRNA, where it nucleates assembly of the 50S subunit.</text>
</comment>
<comment type="subunit">
    <text evidence="1">Part of the 50S ribosomal subunit. Forms a cluster with proteins L14 and L19.</text>
</comment>
<comment type="similarity">
    <text evidence="1">Belongs to the universal ribosomal protein uL3 family.</text>
</comment>